<evidence type="ECO:0000255" key="1">
    <source>
        <dbReference type="HAMAP-Rule" id="MF_01347"/>
    </source>
</evidence>
<name>ATPB1_LISIN</name>
<accession>Q92FG8</accession>
<comment type="function">
    <text evidence="1">Produces ATP from ADP in the presence of a proton gradient across the membrane. The catalytic sites are hosted primarily by the beta subunits.</text>
</comment>
<comment type="catalytic activity">
    <reaction evidence="1">
        <text>ATP + H2O + 4 H(+)(in) = ADP + phosphate + 5 H(+)(out)</text>
        <dbReference type="Rhea" id="RHEA:57720"/>
        <dbReference type="ChEBI" id="CHEBI:15377"/>
        <dbReference type="ChEBI" id="CHEBI:15378"/>
        <dbReference type="ChEBI" id="CHEBI:30616"/>
        <dbReference type="ChEBI" id="CHEBI:43474"/>
        <dbReference type="ChEBI" id="CHEBI:456216"/>
        <dbReference type="EC" id="7.1.2.2"/>
    </reaction>
</comment>
<comment type="subunit">
    <text evidence="1">F-type ATPases have 2 components, CF(1) - the catalytic core - and CF(0) - the membrane proton channel. CF(1) has five subunits: alpha(3), beta(3), gamma(1), delta(1), epsilon(1). CF(0) has three main subunits: a(1), b(2) and c(9-12). The alpha and beta chains form an alternating ring which encloses part of the gamma chain. CF(1) is attached to CF(0) by a central stalk formed by the gamma and epsilon chains, while a peripheral stalk is formed by the delta and b chains.</text>
</comment>
<comment type="subcellular location">
    <subcellularLocation>
        <location evidence="1">Cell membrane</location>
        <topology evidence="1">Peripheral membrane protein</topology>
    </subcellularLocation>
</comment>
<comment type="similarity">
    <text evidence="1">Belongs to the ATPase alpha/beta chains family.</text>
</comment>
<reference key="1">
    <citation type="journal article" date="2001" name="Science">
        <title>Comparative genomics of Listeria species.</title>
        <authorList>
            <person name="Glaser P."/>
            <person name="Frangeul L."/>
            <person name="Buchrieser C."/>
            <person name="Rusniok C."/>
            <person name="Amend A."/>
            <person name="Baquero F."/>
            <person name="Berche P."/>
            <person name="Bloecker H."/>
            <person name="Brandt P."/>
            <person name="Chakraborty T."/>
            <person name="Charbit A."/>
            <person name="Chetouani F."/>
            <person name="Couve E."/>
            <person name="de Daruvar A."/>
            <person name="Dehoux P."/>
            <person name="Domann E."/>
            <person name="Dominguez-Bernal G."/>
            <person name="Duchaud E."/>
            <person name="Durant L."/>
            <person name="Dussurget O."/>
            <person name="Entian K.-D."/>
            <person name="Fsihi H."/>
            <person name="Garcia-del Portillo F."/>
            <person name="Garrido P."/>
            <person name="Gautier L."/>
            <person name="Goebel W."/>
            <person name="Gomez-Lopez N."/>
            <person name="Hain T."/>
            <person name="Hauf J."/>
            <person name="Jackson D."/>
            <person name="Jones L.-M."/>
            <person name="Kaerst U."/>
            <person name="Kreft J."/>
            <person name="Kuhn M."/>
            <person name="Kunst F."/>
            <person name="Kurapkat G."/>
            <person name="Madueno E."/>
            <person name="Maitournam A."/>
            <person name="Mata Vicente J."/>
            <person name="Ng E."/>
            <person name="Nedjari H."/>
            <person name="Nordsiek G."/>
            <person name="Novella S."/>
            <person name="de Pablos B."/>
            <person name="Perez-Diaz J.-C."/>
            <person name="Purcell R."/>
            <person name="Remmel B."/>
            <person name="Rose M."/>
            <person name="Schlueter T."/>
            <person name="Simoes N."/>
            <person name="Tierrez A."/>
            <person name="Vazquez-Boland J.-A."/>
            <person name="Voss H."/>
            <person name="Wehland J."/>
            <person name="Cossart P."/>
        </authorList>
    </citation>
    <scope>NUCLEOTIDE SEQUENCE [LARGE SCALE GENOMIC DNA]</scope>
    <source>
        <strain>ATCC BAA-680 / CLIP 11262</strain>
    </source>
</reference>
<gene>
    <name evidence="1" type="primary">atpD1</name>
    <name type="ordered locus">lin0138</name>
</gene>
<dbReference type="EC" id="7.1.2.2" evidence="1"/>
<dbReference type="EMBL" id="AL596163">
    <property type="protein sequence ID" value="CAC95371.1"/>
    <property type="molecule type" value="Genomic_DNA"/>
</dbReference>
<dbReference type="PIR" id="AC1450">
    <property type="entry name" value="AC1450"/>
</dbReference>
<dbReference type="RefSeq" id="WP_003772623.1">
    <property type="nucleotide sequence ID" value="NC_003212.1"/>
</dbReference>
<dbReference type="SMR" id="Q92FG8"/>
<dbReference type="STRING" id="272626.gene:17564450"/>
<dbReference type="GeneID" id="93233573"/>
<dbReference type="KEGG" id="lin:lin0138"/>
<dbReference type="eggNOG" id="COG0055">
    <property type="taxonomic scope" value="Bacteria"/>
</dbReference>
<dbReference type="HOGENOM" id="CLU_022398_0_2_9"/>
<dbReference type="OrthoDB" id="9802718at2"/>
<dbReference type="Proteomes" id="UP000002513">
    <property type="component" value="Chromosome"/>
</dbReference>
<dbReference type="GO" id="GO:0005886">
    <property type="term" value="C:plasma membrane"/>
    <property type="evidence" value="ECO:0007669"/>
    <property type="project" value="UniProtKB-SubCell"/>
</dbReference>
<dbReference type="GO" id="GO:0045259">
    <property type="term" value="C:proton-transporting ATP synthase complex"/>
    <property type="evidence" value="ECO:0007669"/>
    <property type="project" value="UniProtKB-KW"/>
</dbReference>
<dbReference type="GO" id="GO:0005524">
    <property type="term" value="F:ATP binding"/>
    <property type="evidence" value="ECO:0007669"/>
    <property type="project" value="UniProtKB-UniRule"/>
</dbReference>
<dbReference type="GO" id="GO:0016887">
    <property type="term" value="F:ATP hydrolysis activity"/>
    <property type="evidence" value="ECO:0007669"/>
    <property type="project" value="InterPro"/>
</dbReference>
<dbReference type="GO" id="GO:0046933">
    <property type="term" value="F:proton-transporting ATP synthase activity, rotational mechanism"/>
    <property type="evidence" value="ECO:0007669"/>
    <property type="project" value="UniProtKB-UniRule"/>
</dbReference>
<dbReference type="CDD" id="cd18110">
    <property type="entry name" value="ATP-synt_F1_beta_C"/>
    <property type="match status" value="1"/>
</dbReference>
<dbReference type="CDD" id="cd18115">
    <property type="entry name" value="ATP-synt_F1_beta_N"/>
    <property type="match status" value="1"/>
</dbReference>
<dbReference type="CDD" id="cd01133">
    <property type="entry name" value="F1-ATPase_beta_CD"/>
    <property type="match status" value="1"/>
</dbReference>
<dbReference type="FunFam" id="1.10.1140.10:FF:000006">
    <property type="entry name" value="ATP synthase subunit beta"/>
    <property type="match status" value="1"/>
</dbReference>
<dbReference type="FunFam" id="3.40.50.300:FF:001630">
    <property type="entry name" value="ATP synthase subunit beta"/>
    <property type="match status" value="1"/>
</dbReference>
<dbReference type="Gene3D" id="2.40.10.170">
    <property type="match status" value="1"/>
</dbReference>
<dbReference type="Gene3D" id="1.10.1140.10">
    <property type="entry name" value="Bovine Mitochondrial F1-atpase, Atp Synthase Beta Chain, Chain D, domain 3"/>
    <property type="match status" value="1"/>
</dbReference>
<dbReference type="Gene3D" id="3.40.50.300">
    <property type="entry name" value="P-loop containing nucleotide triphosphate hydrolases"/>
    <property type="match status" value="1"/>
</dbReference>
<dbReference type="HAMAP" id="MF_01347">
    <property type="entry name" value="ATP_synth_beta_bact"/>
    <property type="match status" value="1"/>
</dbReference>
<dbReference type="InterPro" id="IPR003593">
    <property type="entry name" value="AAA+_ATPase"/>
</dbReference>
<dbReference type="InterPro" id="IPR055190">
    <property type="entry name" value="ATP-synt_VA_C"/>
</dbReference>
<dbReference type="InterPro" id="IPR005722">
    <property type="entry name" value="ATP_synth_F1_bsu"/>
</dbReference>
<dbReference type="InterPro" id="IPR020003">
    <property type="entry name" value="ATPase_a/bsu_AS"/>
</dbReference>
<dbReference type="InterPro" id="IPR050053">
    <property type="entry name" value="ATPase_alpha/beta_chains"/>
</dbReference>
<dbReference type="InterPro" id="IPR004100">
    <property type="entry name" value="ATPase_F1/V1/A1_a/bsu_N"/>
</dbReference>
<dbReference type="InterPro" id="IPR036121">
    <property type="entry name" value="ATPase_F1/V1/A1_a/bsu_N_sf"/>
</dbReference>
<dbReference type="InterPro" id="IPR000194">
    <property type="entry name" value="ATPase_F1/V1/A1_a/bsu_nucl-bd"/>
</dbReference>
<dbReference type="InterPro" id="IPR024034">
    <property type="entry name" value="ATPase_F1/V1_b/a_C"/>
</dbReference>
<dbReference type="InterPro" id="IPR027417">
    <property type="entry name" value="P-loop_NTPase"/>
</dbReference>
<dbReference type="NCBIfam" id="TIGR01039">
    <property type="entry name" value="atpD"/>
    <property type="match status" value="1"/>
</dbReference>
<dbReference type="PANTHER" id="PTHR15184">
    <property type="entry name" value="ATP SYNTHASE"/>
    <property type="match status" value="1"/>
</dbReference>
<dbReference type="PANTHER" id="PTHR15184:SF71">
    <property type="entry name" value="ATP SYNTHASE SUBUNIT BETA, MITOCHONDRIAL"/>
    <property type="match status" value="1"/>
</dbReference>
<dbReference type="Pfam" id="PF00006">
    <property type="entry name" value="ATP-synt_ab"/>
    <property type="match status" value="1"/>
</dbReference>
<dbReference type="Pfam" id="PF02874">
    <property type="entry name" value="ATP-synt_ab_N"/>
    <property type="match status" value="1"/>
</dbReference>
<dbReference type="Pfam" id="PF22919">
    <property type="entry name" value="ATP-synt_VA_C"/>
    <property type="match status" value="1"/>
</dbReference>
<dbReference type="SMART" id="SM00382">
    <property type="entry name" value="AAA"/>
    <property type="match status" value="1"/>
</dbReference>
<dbReference type="SUPFAM" id="SSF47917">
    <property type="entry name" value="C-terminal domain of alpha and beta subunits of F1 ATP synthase"/>
    <property type="match status" value="1"/>
</dbReference>
<dbReference type="SUPFAM" id="SSF50615">
    <property type="entry name" value="N-terminal domain of alpha and beta subunits of F1 ATP synthase"/>
    <property type="match status" value="1"/>
</dbReference>
<dbReference type="SUPFAM" id="SSF52540">
    <property type="entry name" value="P-loop containing nucleoside triphosphate hydrolases"/>
    <property type="match status" value="1"/>
</dbReference>
<dbReference type="PROSITE" id="PS00152">
    <property type="entry name" value="ATPASE_ALPHA_BETA"/>
    <property type="match status" value="1"/>
</dbReference>
<protein>
    <recommendedName>
        <fullName evidence="1">ATP synthase subunit beta 1</fullName>
        <ecNumber evidence="1">7.1.2.2</ecNumber>
    </recommendedName>
    <alternativeName>
        <fullName evidence="1">ATP synthase F1 sector subunit beta 1</fullName>
    </alternativeName>
    <alternativeName>
        <fullName evidence="1">F-ATPase subunit beta 1</fullName>
    </alternativeName>
</protein>
<sequence length="456" mass="50233">MKKNIGTIISISGFVLKIEFNESELPEISHALEYKTHQGTYLAEVVQHTGINTVSAIAIGEVSGLARGAEVINLGHPIEVPVGETVQGRMLNVYGKAIDGLPEPEAEVKWPIFREQPLLRELDTNKEILYTGIKVIDLICPILKGGKTGLFGGAGVGKSVLMQELINNISMMGGNSVFTGVGERVREGIGLYNELESSGVLPQTTVVLGQMNESPGVRMRVALTGLTIAEYLRDEEKKDVLLFIDNVFRFIQAGSEVSSLQGKIPITGGYQSTLSKEVGDFQDRIASTKNGSITSIQCVFLPADDIDDPSAVATFSHLDSTIVLERSIAALGIFPAVNPLQSFSRALNPTFVGERHYQLAVQVKFILQRYMELQEIINVLGMAELSDEDKKLVHRARKIRNFLSQPFYVSEKFTGTEGIFVEIEDLLSSVERILNGEYDERSEREFLFIGSYKDLK</sequence>
<keyword id="KW-0066">ATP synthesis</keyword>
<keyword id="KW-0067">ATP-binding</keyword>
<keyword id="KW-1003">Cell membrane</keyword>
<keyword id="KW-0139">CF(1)</keyword>
<keyword id="KW-0375">Hydrogen ion transport</keyword>
<keyword id="KW-0406">Ion transport</keyword>
<keyword id="KW-0472">Membrane</keyword>
<keyword id="KW-0547">Nucleotide-binding</keyword>
<keyword id="KW-1278">Translocase</keyword>
<keyword id="KW-0813">Transport</keyword>
<organism>
    <name type="scientific">Listeria innocua serovar 6a (strain ATCC BAA-680 / CLIP 11262)</name>
    <dbReference type="NCBI Taxonomy" id="272626"/>
    <lineage>
        <taxon>Bacteria</taxon>
        <taxon>Bacillati</taxon>
        <taxon>Bacillota</taxon>
        <taxon>Bacilli</taxon>
        <taxon>Bacillales</taxon>
        <taxon>Listeriaceae</taxon>
        <taxon>Listeria</taxon>
    </lineage>
</organism>
<feature type="chain" id="PRO_0000339537" description="ATP synthase subunit beta 1">
    <location>
        <begin position="1"/>
        <end position="456"/>
    </location>
</feature>
<feature type="binding site" evidence="1">
    <location>
        <begin position="152"/>
        <end position="159"/>
    </location>
    <ligand>
        <name>ATP</name>
        <dbReference type="ChEBI" id="CHEBI:30616"/>
    </ligand>
</feature>
<proteinExistence type="inferred from homology"/>